<dbReference type="EC" id="3.1.1.4"/>
<dbReference type="SMR" id="P0CAS7"/>
<dbReference type="GO" id="GO:0005576">
    <property type="term" value="C:extracellular region"/>
    <property type="evidence" value="ECO:0007669"/>
    <property type="project" value="UniProtKB-SubCell"/>
</dbReference>
<dbReference type="GO" id="GO:0005509">
    <property type="term" value="F:calcium ion binding"/>
    <property type="evidence" value="ECO:0007669"/>
    <property type="project" value="InterPro"/>
</dbReference>
<dbReference type="GO" id="GO:0047498">
    <property type="term" value="F:calcium-dependent phospholipase A2 activity"/>
    <property type="evidence" value="ECO:0007669"/>
    <property type="project" value="TreeGrafter"/>
</dbReference>
<dbReference type="GO" id="GO:0005543">
    <property type="term" value="F:phospholipid binding"/>
    <property type="evidence" value="ECO:0007669"/>
    <property type="project" value="TreeGrafter"/>
</dbReference>
<dbReference type="GO" id="GO:0090729">
    <property type="term" value="F:toxin activity"/>
    <property type="evidence" value="ECO:0007669"/>
    <property type="project" value="UniProtKB-KW"/>
</dbReference>
<dbReference type="GO" id="GO:0050482">
    <property type="term" value="P:arachidonate secretion"/>
    <property type="evidence" value="ECO:0007669"/>
    <property type="project" value="InterPro"/>
</dbReference>
<dbReference type="GO" id="GO:0042742">
    <property type="term" value="P:defense response to bacterium"/>
    <property type="evidence" value="ECO:0007669"/>
    <property type="project" value="UniProtKB-KW"/>
</dbReference>
<dbReference type="GO" id="GO:0016042">
    <property type="term" value="P:lipid catabolic process"/>
    <property type="evidence" value="ECO:0007669"/>
    <property type="project" value="UniProtKB-KW"/>
</dbReference>
<dbReference type="GO" id="GO:0042130">
    <property type="term" value="P:negative regulation of T cell proliferation"/>
    <property type="evidence" value="ECO:0007669"/>
    <property type="project" value="TreeGrafter"/>
</dbReference>
<dbReference type="GO" id="GO:0006644">
    <property type="term" value="P:phospholipid metabolic process"/>
    <property type="evidence" value="ECO:0007669"/>
    <property type="project" value="InterPro"/>
</dbReference>
<dbReference type="CDD" id="cd00125">
    <property type="entry name" value="PLA2c"/>
    <property type="match status" value="1"/>
</dbReference>
<dbReference type="FunFam" id="1.20.90.10:FF:000001">
    <property type="entry name" value="Basic phospholipase A2 homolog"/>
    <property type="match status" value="1"/>
</dbReference>
<dbReference type="Gene3D" id="1.20.90.10">
    <property type="entry name" value="Phospholipase A2 domain"/>
    <property type="match status" value="1"/>
</dbReference>
<dbReference type="InterPro" id="IPR001211">
    <property type="entry name" value="PLipase_A2"/>
</dbReference>
<dbReference type="InterPro" id="IPR033112">
    <property type="entry name" value="PLipase_A2_Asp_AS"/>
</dbReference>
<dbReference type="InterPro" id="IPR016090">
    <property type="entry name" value="PLipase_A2_dom"/>
</dbReference>
<dbReference type="InterPro" id="IPR036444">
    <property type="entry name" value="PLipase_A2_dom_sf"/>
</dbReference>
<dbReference type="InterPro" id="IPR033113">
    <property type="entry name" value="PLipase_A2_His_AS"/>
</dbReference>
<dbReference type="PANTHER" id="PTHR11716">
    <property type="entry name" value="PHOSPHOLIPASE A2 FAMILY MEMBER"/>
    <property type="match status" value="1"/>
</dbReference>
<dbReference type="PANTHER" id="PTHR11716:SF9">
    <property type="entry name" value="PHOSPHOLIPASE A2, MEMBRANE ASSOCIATED"/>
    <property type="match status" value="1"/>
</dbReference>
<dbReference type="Pfam" id="PF00068">
    <property type="entry name" value="Phospholip_A2_1"/>
    <property type="match status" value="1"/>
</dbReference>
<dbReference type="PRINTS" id="PR00389">
    <property type="entry name" value="PHPHLIPASEA2"/>
</dbReference>
<dbReference type="SMART" id="SM00085">
    <property type="entry name" value="PA2c"/>
    <property type="match status" value="1"/>
</dbReference>
<dbReference type="SUPFAM" id="SSF48619">
    <property type="entry name" value="Phospholipase A2, PLA2"/>
    <property type="match status" value="1"/>
</dbReference>
<dbReference type="PROSITE" id="PS00119">
    <property type="entry name" value="PA2_ASP"/>
    <property type="match status" value="1"/>
</dbReference>
<dbReference type="PROSITE" id="PS00118">
    <property type="entry name" value="PA2_HIS"/>
    <property type="match status" value="1"/>
</dbReference>
<proteinExistence type="evidence at protein level"/>
<comment type="function">
    <text evidence="4">Snake venom phospholipase A2 (PLA2) that has anticoagulant activity and inhibits bactericial growth of the Gram-negative bacteria Xanthomonas axonopodis pv. passiflorae (in monomeric form). PLA2 catalyzes the calcium-dependent hydrolysis of the 2-acyl groups in 3-sn-phosphoglycerides.</text>
</comment>
<comment type="catalytic activity">
    <reaction evidence="2 3">
        <text>a 1,2-diacyl-sn-glycero-3-phosphocholine + H2O = a 1-acyl-sn-glycero-3-phosphocholine + a fatty acid + H(+)</text>
        <dbReference type="Rhea" id="RHEA:15801"/>
        <dbReference type="ChEBI" id="CHEBI:15377"/>
        <dbReference type="ChEBI" id="CHEBI:15378"/>
        <dbReference type="ChEBI" id="CHEBI:28868"/>
        <dbReference type="ChEBI" id="CHEBI:57643"/>
        <dbReference type="ChEBI" id="CHEBI:58168"/>
        <dbReference type="EC" id="3.1.1.4"/>
    </reaction>
</comment>
<comment type="cofactor">
    <cofactor evidence="4">
        <name>Ca(2+)</name>
        <dbReference type="ChEBI" id="CHEBI:29108"/>
    </cofactor>
    <text evidence="4">Binds 1 Ca(2+) ion.</text>
</comment>
<comment type="activity regulation">
    <text evidence="4">Activated by heparin. Inhibited by its chaperone crotapotin.</text>
</comment>
<comment type="biophysicochemical properties">
    <kinetics>
        <KM evidence="4">31.2 mM for 4-nitro-3-(octanoyloxy)benzoic acid</KM>
        <Vmax evidence="4">8.2 nmol/min/mg enzyme</Vmax>
    </kinetics>
    <phDependence>
        <text evidence="4">Optimum pH is 7.9.</text>
    </phDependence>
    <temperatureDependence>
        <text evidence="4">Optimum temperature is 10-30 degrees Celsius.</text>
    </temperatureDependence>
</comment>
<comment type="subunit">
    <text>When this protein is associated with crotapotin (F5 or F7), it forms the crotoxin protein.</text>
</comment>
<comment type="subcellular location">
    <subcellularLocation>
        <location>Secreted</location>
    </subcellularLocation>
</comment>
<comment type="tissue specificity">
    <text>Expressed by the venom gland.</text>
</comment>
<comment type="similarity">
    <text evidence="5">Belongs to the phospholipase A2 family. Group II subfamily. D49 sub-subfamily.</text>
</comment>
<keyword id="KW-0044">Antibiotic</keyword>
<keyword id="KW-0929">Antimicrobial</keyword>
<keyword id="KW-1203">Blood coagulation cascade inhibiting toxin</keyword>
<keyword id="KW-0106">Calcium</keyword>
<keyword id="KW-0903">Direct protein sequencing</keyword>
<keyword id="KW-1015">Disulfide bond</keyword>
<keyword id="KW-1199">Hemostasis impairing toxin</keyword>
<keyword id="KW-0378">Hydrolase</keyword>
<keyword id="KW-0442">Lipid degradation</keyword>
<keyword id="KW-0443">Lipid metabolism</keyword>
<keyword id="KW-0479">Metal-binding</keyword>
<keyword id="KW-0964">Secreted</keyword>
<keyword id="KW-0800">Toxin</keyword>
<organism>
    <name type="scientific">Crotalus durissus terrificus</name>
    <name type="common">South American rattlesnake</name>
    <dbReference type="NCBI Taxonomy" id="8732"/>
    <lineage>
        <taxon>Eukaryota</taxon>
        <taxon>Metazoa</taxon>
        <taxon>Chordata</taxon>
        <taxon>Craniata</taxon>
        <taxon>Vertebrata</taxon>
        <taxon>Euteleostomi</taxon>
        <taxon>Lepidosauria</taxon>
        <taxon>Squamata</taxon>
        <taxon>Bifurcata</taxon>
        <taxon>Unidentata</taxon>
        <taxon>Episquamata</taxon>
        <taxon>Toxicofera</taxon>
        <taxon>Serpentes</taxon>
        <taxon>Colubroidea</taxon>
        <taxon>Viperidae</taxon>
        <taxon>Crotalinae</taxon>
        <taxon>Crotalus</taxon>
    </lineage>
</organism>
<accession>P0CAS7</accession>
<protein>
    <recommendedName>
        <fullName>Basic phospholipase A2 F17</fullName>
        <shortName>svPLA2</shortName>
        <ecNumber>3.1.1.4</ecNumber>
    </recommendedName>
    <alternativeName>
        <fullName>CdtF17</fullName>
    </alternativeName>
    <alternativeName>
        <fullName>Phosphatidylcholine 2-acylhydrolase</fullName>
    </alternativeName>
</protein>
<reference key="1">
    <citation type="journal article" date="2002" name="J. Protein Chem.">
        <title>Structural and functional characterization of basic PLA2 isolated from Crotalus durissus terrificus venom.</title>
        <authorList>
            <person name="Oliveira D.G."/>
            <person name="Toyama M.H."/>
            <person name="Novello J.C."/>
            <person name="Beriam L.O.S."/>
            <person name="Marangoni S."/>
        </authorList>
    </citation>
    <scope>PROTEIN SEQUENCE</scope>
    <scope>FUNCTION</scope>
    <scope>COFACTOR</scope>
    <scope>ACTIVITY REGULATION</scope>
    <scope>BIOPHYSICOCHEMICAL PROPERTIES</scope>
    <source>
        <tissue>Venom</tissue>
    </source>
</reference>
<sequence length="121" mass="14368">HLLQFNKMLKFETRKNAVPFYAFGCYCGWGGQRRPKDATDRCCFVHDCCYEKVTKCNTKWDFYRYSLKSGYITCGKGTWCKEQICECDRVAAECLRRSLSTYKNEYMFYPDSRCREPSETC</sequence>
<feature type="chain" id="PRO_0000376924" description="Basic phospholipase A2 F17">
    <location>
        <begin position="1"/>
        <end position="121"/>
    </location>
</feature>
<feature type="active site" evidence="1">
    <location>
        <position position="46"/>
    </location>
</feature>
<feature type="active site" evidence="1">
    <location>
        <position position="88"/>
    </location>
</feature>
<feature type="binding site" evidence="1">
    <location>
        <position position="26"/>
    </location>
    <ligand>
        <name>Ca(2+)</name>
        <dbReference type="ChEBI" id="CHEBI:29108"/>
    </ligand>
</feature>
<feature type="binding site" evidence="1">
    <location>
        <position position="28"/>
    </location>
    <ligand>
        <name>Ca(2+)</name>
        <dbReference type="ChEBI" id="CHEBI:29108"/>
    </ligand>
</feature>
<feature type="binding site" evidence="1">
    <location>
        <position position="30"/>
    </location>
    <ligand>
        <name>Ca(2+)</name>
        <dbReference type="ChEBI" id="CHEBI:29108"/>
    </ligand>
</feature>
<feature type="binding site" evidence="1">
    <location>
        <position position="47"/>
    </location>
    <ligand>
        <name>Ca(2+)</name>
        <dbReference type="ChEBI" id="CHEBI:29108"/>
    </ligand>
</feature>
<feature type="disulfide bond" evidence="1">
    <location>
        <begin position="25"/>
        <end position="114"/>
    </location>
</feature>
<feature type="disulfide bond" evidence="1">
    <location>
        <begin position="27"/>
        <end position="43"/>
    </location>
</feature>
<feature type="disulfide bond" evidence="1">
    <location>
        <begin position="42"/>
        <end position="94"/>
    </location>
</feature>
<feature type="disulfide bond" evidence="1">
    <location>
        <begin position="48"/>
        <end position="121"/>
    </location>
</feature>
<feature type="disulfide bond" evidence="1">
    <location>
        <begin position="49"/>
        <end position="87"/>
    </location>
</feature>
<feature type="disulfide bond" evidence="1">
    <location>
        <begin position="56"/>
        <end position="80"/>
    </location>
</feature>
<feature type="disulfide bond" evidence="1">
    <location>
        <begin position="74"/>
        <end position="85"/>
    </location>
</feature>
<name>PA2BG_CRODU</name>
<evidence type="ECO:0000250" key="1"/>
<evidence type="ECO:0000255" key="2">
    <source>
        <dbReference type="PROSITE-ProRule" id="PRU10035"/>
    </source>
</evidence>
<evidence type="ECO:0000255" key="3">
    <source>
        <dbReference type="PROSITE-ProRule" id="PRU10036"/>
    </source>
</evidence>
<evidence type="ECO:0000269" key="4">
    <source>
    </source>
</evidence>
<evidence type="ECO:0000305" key="5"/>